<name>IBPA_ECOBW</name>
<gene>
    <name evidence="1" type="primary">ibpA</name>
    <name type="ordered locus">BWG_3377</name>
</gene>
<feature type="chain" id="PRO_1000216227" description="Small heat shock protein IbpA">
    <location>
        <begin position="1"/>
        <end position="137"/>
    </location>
</feature>
<feature type="domain" description="sHSP" evidence="2">
    <location>
        <begin position="28"/>
        <end position="137"/>
    </location>
</feature>
<reference key="1">
    <citation type="journal article" date="2009" name="J. Bacteriol.">
        <title>Genomic sequencing reveals regulatory mutations and recombinational events in the widely used MC4100 lineage of Escherichia coli K-12.</title>
        <authorList>
            <person name="Ferenci T."/>
            <person name="Zhou Z."/>
            <person name="Betteridge T."/>
            <person name="Ren Y."/>
            <person name="Liu Y."/>
            <person name="Feng L."/>
            <person name="Reeves P.R."/>
            <person name="Wang L."/>
        </authorList>
    </citation>
    <scope>NUCLEOTIDE SEQUENCE [LARGE SCALE GENOMIC DNA]</scope>
    <source>
        <strain>K12 / MC4100 / BW2952</strain>
    </source>
</reference>
<organism>
    <name type="scientific">Escherichia coli (strain K12 / MC4100 / BW2952)</name>
    <dbReference type="NCBI Taxonomy" id="595496"/>
    <lineage>
        <taxon>Bacteria</taxon>
        <taxon>Pseudomonadati</taxon>
        <taxon>Pseudomonadota</taxon>
        <taxon>Gammaproteobacteria</taxon>
        <taxon>Enterobacterales</taxon>
        <taxon>Enterobacteriaceae</taxon>
        <taxon>Escherichia</taxon>
    </lineage>
</organism>
<keyword id="KW-0143">Chaperone</keyword>
<keyword id="KW-0963">Cytoplasm</keyword>
<keyword id="KW-0346">Stress response</keyword>
<accession>C4ZYW4</accession>
<dbReference type="EMBL" id="CP001396">
    <property type="protein sequence ID" value="ACR63400.1"/>
    <property type="molecule type" value="Genomic_DNA"/>
</dbReference>
<dbReference type="RefSeq" id="WP_001243437.1">
    <property type="nucleotide sequence ID" value="NC_012759.1"/>
</dbReference>
<dbReference type="SMR" id="C4ZYW4"/>
<dbReference type="GeneID" id="93778428"/>
<dbReference type="KEGG" id="ebw:BWG_3377"/>
<dbReference type="HOGENOM" id="CLU_046737_4_2_6"/>
<dbReference type="GO" id="GO:0005737">
    <property type="term" value="C:cytoplasm"/>
    <property type="evidence" value="ECO:0007669"/>
    <property type="project" value="UniProtKB-SubCell"/>
</dbReference>
<dbReference type="GO" id="GO:0050821">
    <property type="term" value="P:protein stabilization"/>
    <property type="evidence" value="ECO:0007669"/>
    <property type="project" value="UniProtKB-UniRule"/>
</dbReference>
<dbReference type="CDD" id="cd06470">
    <property type="entry name" value="ACD_IbpA-B_like"/>
    <property type="match status" value="1"/>
</dbReference>
<dbReference type="FunFam" id="2.60.40.790:FF:000002">
    <property type="entry name" value="Small heat shock protein IbpA"/>
    <property type="match status" value="1"/>
</dbReference>
<dbReference type="Gene3D" id="2.60.40.790">
    <property type="match status" value="1"/>
</dbReference>
<dbReference type="HAMAP" id="MF_02000">
    <property type="entry name" value="HSP20_IbpA"/>
    <property type="match status" value="1"/>
</dbReference>
<dbReference type="InterPro" id="IPR002068">
    <property type="entry name" value="A-crystallin/Hsp20_dom"/>
</dbReference>
<dbReference type="InterPro" id="IPR037913">
    <property type="entry name" value="ACD_IbpA/B"/>
</dbReference>
<dbReference type="InterPro" id="IPR008978">
    <property type="entry name" value="HSP20-like_chaperone"/>
</dbReference>
<dbReference type="InterPro" id="IPR023728">
    <property type="entry name" value="HSP20_IbpA"/>
</dbReference>
<dbReference type="NCBIfam" id="NF008013">
    <property type="entry name" value="PRK10743.1"/>
    <property type="match status" value="1"/>
</dbReference>
<dbReference type="PANTHER" id="PTHR47062">
    <property type="match status" value="1"/>
</dbReference>
<dbReference type="PANTHER" id="PTHR47062:SF1">
    <property type="entry name" value="SMALL HEAT SHOCK PROTEIN IBPA"/>
    <property type="match status" value="1"/>
</dbReference>
<dbReference type="Pfam" id="PF00011">
    <property type="entry name" value="HSP20"/>
    <property type="match status" value="1"/>
</dbReference>
<dbReference type="SUPFAM" id="SSF49764">
    <property type="entry name" value="HSP20-like chaperones"/>
    <property type="match status" value="1"/>
</dbReference>
<dbReference type="PROSITE" id="PS01031">
    <property type="entry name" value="SHSP"/>
    <property type="match status" value="1"/>
</dbReference>
<evidence type="ECO:0000255" key="1">
    <source>
        <dbReference type="HAMAP-Rule" id="MF_02000"/>
    </source>
</evidence>
<evidence type="ECO:0000255" key="2">
    <source>
        <dbReference type="PROSITE-ProRule" id="PRU00285"/>
    </source>
</evidence>
<proteinExistence type="inferred from homology"/>
<protein>
    <recommendedName>
        <fullName evidence="1">Small heat shock protein IbpA</fullName>
    </recommendedName>
    <alternativeName>
        <fullName evidence="1">16 kDa heat shock protein A</fullName>
    </alternativeName>
</protein>
<sequence>MRNFDLSPLYRSAIGFDRLFNHLENNQSQSNGGYPPYNVELVDENHYRIAIAVAGFAESELEITAQDNLLVVKGAHADEQKERTYLYQGIAERNFERKFQLAENIHVRGANLVNGLLYIDLERVIPEAKKPRRIEIN</sequence>
<comment type="function">
    <text evidence="1">Associates with aggregated proteins, together with IbpB, to stabilize and protect them from irreversible denaturation and extensive proteolysis during heat shock and oxidative stress. Aggregated proteins bound to the IbpAB complex are more efficiently refolded and reactivated by the ATP-dependent chaperone systems ClpB and DnaK/DnaJ/GrpE. Its activity is ATP-independent.</text>
</comment>
<comment type="subunit">
    <text evidence="1">Monomer. Forms homomultimers of about 100-150 subunits at optimal growth temperatures. Conformation changes to monomers at high temperatures or high ionic concentrations.</text>
</comment>
<comment type="subcellular location">
    <subcellularLocation>
        <location evidence="1">Cytoplasm</location>
    </subcellularLocation>
</comment>
<comment type="similarity">
    <text evidence="1 2">Belongs to the small heat shock protein (HSP20) family.</text>
</comment>